<comment type="function">
    <text evidence="1">ATP-binding RNA helicase involved in mitochondrial RNA metabolism. Required for maintenance of mitochondrial DNA (By similarity).</text>
</comment>
<comment type="catalytic activity">
    <reaction>
        <text>ATP + H2O = ADP + phosphate + H(+)</text>
        <dbReference type="Rhea" id="RHEA:13065"/>
        <dbReference type="ChEBI" id="CHEBI:15377"/>
        <dbReference type="ChEBI" id="CHEBI:15378"/>
        <dbReference type="ChEBI" id="CHEBI:30616"/>
        <dbReference type="ChEBI" id="CHEBI:43474"/>
        <dbReference type="ChEBI" id="CHEBI:456216"/>
        <dbReference type="EC" id="3.6.4.13"/>
    </reaction>
</comment>
<comment type="subcellular location">
    <subcellularLocation>
        <location evidence="1">Mitochondrion</location>
    </subcellularLocation>
</comment>
<comment type="domain">
    <text>The Q motif is unique to and characteristic of the DEAD box family of RNA helicases and controls ATP binding and hydrolysis.</text>
</comment>
<comment type="similarity">
    <text evidence="6">Belongs to the DEAD box helicase family. MRH4 subfamily.</text>
</comment>
<accession>Q7SBR1</accession>
<sequence>MWKTARDSVCLICRSAATTTTSTSARASLEPWAGQRTFSTRREQRPSRMVLSDRVARPPPVRGPGEGNKKPRNKPDGPWAGMNRRVANIDPRKAPKPKPVEEDSRRDKRDKNTKGQKALKMQRALATISYGQRTSIKERMQEIQAFDQFDLLPVVKEAIAQEALKGMTEIKPTPVQRLAIPALLGQPMGRKPRRPKSDNGREEFLLAAETGSGKTLAYLVPAVNAIKKGDADDELVASYNERLAAEKERRGGAPVSEWIEKFEPHPNTARPRVVVLVPTAELVDQVTSVAKKLAHYTKFKVRPLSASISPLRNQRNLYSPIGVDMIVSTPHLLATIAKSDPNVLSRVSHLVIDEADSLLDRSFSGDTTSIVDRAMPSLKQLILCSATIPRRLDTYMEEQFPYINRITTPNLHAIPRRVQLGVIDVSKDPYRNNKMLACADAIWSIGKEAAKHEGPKSEIDVKRIMVFVNERETTQQVADYLVSKGIDAIALHRDTEEHRKSEMLASFTSNEPMKISRPADDDVAAAAAEGGKAGGAVSSSPTRRHLPNTKVIVATDLASRGIDTLAVRYVVLYDVPHTTIDFIHRLGRAGRMNRRGRGIVLVGKDDRRDVVAEVKESMFMGQALV</sequence>
<evidence type="ECO:0000250" key="1"/>
<evidence type="ECO:0000255" key="2"/>
<evidence type="ECO:0000255" key="3">
    <source>
        <dbReference type="PROSITE-ProRule" id="PRU00541"/>
    </source>
</evidence>
<evidence type="ECO:0000255" key="4">
    <source>
        <dbReference type="PROSITE-ProRule" id="PRU00542"/>
    </source>
</evidence>
<evidence type="ECO:0000256" key="5">
    <source>
        <dbReference type="SAM" id="MobiDB-lite"/>
    </source>
</evidence>
<evidence type="ECO:0000305" key="6"/>
<name>MRH4_NEUCR</name>
<proteinExistence type="inferred from homology"/>
<reference key="1">
    <citation type="journal article" date="2003" name="Nature">
        <title>The genome sequence of the filamentous fungus Neurospora crassa.</title>
        <authorList>
            <person name="Galagan J.E."/>
            <person name="Calvo S.E."/>
            <person name="Borkovich K.A."/>
            <person name="Selker E.U."/>
            <person name="Read N.D."/>
            <person name="Jaffe D.B."/>
            <person name="FitzHugh W."/>
            <person name="Ma L.-J."/>
            <person name="Smirnov S."/>
            <person name="Purcell S."/>
            <person name="Rehman B."/>
            <person name="Elkins T."/>
            <person name="Engels R."/>
            <person name="Wang S."/>
            <person name="Nielsen C.B."/>
            <person name="Butler J."/>
            <person name="Endrizzi M."/>
            <person name="Qui D."/>
            <person name="Ianakiev P."/>
            <person name="Bell-Pedersen D."/>
            <person name="Nelson M.A."/>
            <person name="Werner-Washburne M."/>
            <person name="Selitrennikoff C.P."/>
            <person name="Kinsey J.A."/>
            <person name="Braun E.L."/>
            <person name="Zelter A."/>
            <person name="Schulte U."/>
            <person name="Kothe G.O."/>
            <person name="Jedd G."/>
            <person name="Mewes H.-W."/>
            <person name="Staben C."/>
            <person name="Marcotte E."/>
            <person name="Greenberg D."/>
            <person name="Roy A."/>
            <person name="Foley K."/>
            <person name="Naylor J."/>
            <person name="Stange-Thomann N."/>
            <person name="Barrett R."/>
            <person name="Gnerre S."/>
            <person name="Kamal M."/>
            <person name="Kamvysselis M."/>
            <person name="Mauceli E.W."/>
            <person name="Bielke C."/>
            <person name="Rudd S."/>
            <person name="Frishman D."/>
            <person name="Krystofova S."/>
            <person name="Rasmussen C."/>
            <person name="Metzenberg R.L."/>
            <person name="Perkins D.D."/>
            <person name="Kroken S."/>
            <person name="Cogoni C."/>
            <person name="Macino G."/>
            <person name="Catcheside D.E.A."/>
            <person name="Li W."/>
            <person name="Pratt R.J."/>
            <person name="Osmani S.A."/>
            <person name="DeSouza C.P.C."/>
            <person name="Glass N.L."/>
            <person name="Orbach M.J."/>
            <person name="Berglund J.A."/>
            <person name="Voelker R."/>
            <person name="Yarden O."/>
            <person name="Plamann M."/>
            <person name="Seiler S."/>
            <person name="Dunlap J.C."/>
            <person name="Radford A."/>
            <person name="Aramayo R."/>
            <person name="Natvig D.O."/>
            <person name="Alex L.A."/>
            <person name="Mannhaupt G."/>
            <person name="Ebbole D.J."/>
            <person name="Freitag M."/>
            <person name="Paulsen I."/>
            <person name="Sachs M.S."/>
            <person name="Lander E.S."/>
            <person name="Nusbaum C."/>
            <person name="Birren B.W."/>
        </authorList>
    </citation>
    <scope>NUCLEOTIDE SEQUENCE [LARGE SCALE GENOMIC DNA]</scope>
    <source>
        <strain>ATCC 24698 / 74-OR23-1A / CBS 708.71 / DSM 1257 / FGSC 987</strain>
    </source>
</reference>
<organism>
    <name type="scientific">Neurospora crassa (strain ATCC 24698 / 74-OR23-1A / CBS 708.71 / DSM 1257 / FGSC 987)</name>
    <dbReference type="NCBI Taxonomy" id="367110"/>
    <lineage>
        <taxon>Eukaryota</taxon>
        <taxon>Fungi</taxon>
        <taxon>Dikarya</taxon>
        <taxon>Ascomycota</taxon>
        <taxon>Pezizomycotina</taxon>
        <taxon>Sordariomycetes</taxon>
        <taxon>Sordariomycetidae</taxon>
        <taxon>Sordariales</taxon>
        <taxon>Sordariaceae</taxon>
        <taxon>Neurospora</taxon>
    </lineage>
</organism>
<gene>
    <name type="primary">drh-15</name>
    <name type="synonym">mrh4</name>
    <name type="ORF">NCU06246</name>
</gene>
<keyword id="KW-0067">ATP-binding</keyword>
<keyword id="KW-0347">Helicase</keyword>
<keyword id="KW-0378">Hydrolase</keyword>
<keyword id="KW-0496">Mitochondrion</keyword>
<keyword id="KW-0547">Nucleotide-binding</keyword>
<keyword id="KW-1185">Reference proteome</keyword>
<keyword id="KW-0694">RNA-binding</keyword>
<keyword id="KW-0809">Transit peptide</keyword>
<feature type="transit peptide" description="Mitochondrion" evidence="2">
    <location>
        <begin position="1"/>
        <end position="16"/>
    </location>
</feature>
<feature type="chain" id="PRO_0000232355" description="ATP-dependent RNA helicase mrh4, mitochondrial">
    <location>
        <begin position="17"/>
        <end position="625"/>
    </location>
</feature>
<feature type="domain" description="Helicase ATP-binding" evidence="3">
    <location>
        <begin position="195"/>
        <end position="406"/>
    </location>
</feature>
<feature type="domain" description="Helicase C-terminal" evidence="4">
    <location>
        <begin position="453"/>
        <end position="625"/>
    </location>
</feature>
<feature type="region of interest" description="Disordered" evidence="5">
    <location>
        <begin position="19"/>
        <end position="119"/>
    </location>
</feature>
<feature type="short sequence motif" description="Q motif">
    <location>
        <begin position="144"/>
        <end position="177"/>
    </location>
</feature>
<feature type="short sequence motif" description="DEAD box">
    <location>
        <begin position="353"/>
        <end position="356"/>
    </location>
</feature>
<feature type="compositionally biased region" description="Low complexity" evidence="5">
    <location>
        <begin position="19"/>
        <end position="28"/>
    </location>
</feature>
<feature type="compositionally biased region" description="Basic and acidic residues" evidence="5">
    <location>
        <begin position="90"/>
        <end position="113"/>
    </location>
</feature>
<feature type="binding site" evidence="3">
    <location>
        <begin position="208"/>
        <end position="215"/>
    </location>
    <ligand>
        <name>ATP</name>
        <dbReference type="ChEBI" id="CHEBI:30616"/>
    </ligand>
</feature>
<protein>
    <recommendedName>
        <fullName>ATP-dependent RNA helicase mrh4, mitochondrial</fullName>
        <ecNumber>3.6.4.13</ecNumber>
    </recommendedName>
    <alternativeName>
        <fullName>DEAD box RNA helicase 15</fullName>
    </alternativeName>
</protein>
<dbReference type="EC" id="3.6.4.13"/>
<dbReference type="EMBL" id="CM002238">
    <property type="protein sequence ID" value="EAA33861.3"/>
    <property type="molecule type" value="Genomic_DNA"/>
</dbReference>
<dbReference type="RefSeq" id="XP_963097.3">
    <property type="nucleotide sequence ID" value="XM_958004.3"/>
</dbReference>
<dbReference type="SMR" id="Q7SBR1"/>
<dbReference type="FunCoup" id="Q7SBR1">
    <property type="interactions" value="108"/>
</dbReference>
<dbReference type="STRING" id="367110.Q7SBR1"/>
<dbReference type="EnsemblFungi" id="EAA33861">
    <property type="protein sequence ID" value="EAA33861"/>
    <property type="gene ID" value="NCU06246"/>
</dbReference>
<dbReference type="GeneID" id="3879220"/>
<dbReference type="KEGG" id="ncr:NCU06246"/>
<dbReference type="VEuPathDB" id="FungiDB:NCU06246"/>
<dbReference type="InParanoid" id="Q7SBR1"/>
<dbReference type="OrthoDB" id="10256233at2759"/>
<dbReference type="Proteomes" id="UP000001805">
    <property type="component" value="Chromosome 3, Linkage Group III"/>
</dbReference>
<dbReference type="GO" id="GO:0005739">
    <property type="term" value="C:mitochondrion"/>
    <property type="evidence" value="ECO:0007669"/>
    <property type="project" value="UniProtKB-SubCell"/>
</dbReference>
<dbReference type="GO" id="GO:0005730">
    <property type="term" value="C:nucleolus"/>
    <property type="evidence" value="ECO:0000318"/>
    <property type="project" value="GO_Central"/>
</dbReference>
<dbReference type="GO" id="GO:0005524">
    <property type="term" value="F:ATP binding"/>
    <property type="evidence" value="ECO:0007669"/>
    <property type="project" value="UniProtKB-KW"/>
</dbReference>
<dbReference type="GO" id="GO:0016887">
    <property type="term" value="F:ATP hydrolysis activity"/>
    <property type="evidence" value="ECO:0007669"/>
    <property type="project" value="RHEA"/>
</dbReference>
<dbReference type="GO" id="GO:0003723">
    <property type="term" value="F:RNA binding"/>
    <property type="evidence" value="ECO:0007669"/>
    <property type="project" value="UniProtKB-KW"/>
</dbReference>
<dbReference type="GO" id="GO:0003724">
    <property type="term" value="F:RNA helicase activity"/>
    <property type="evidence" value="ECO:0007669"/>
    <property type="project" value="UniProtKB-EC"/>
</dbReference>
<dbReference type="GO" id="GO:0000463">
    <property type="term" value="P:maturation of LSU-rRNA from tricistronic rRNA transcript (SSU-rRNA, 5.8S rRNA, LSU-rRNA)"/>
    <property type="evidence" value="ECO:0000318"/>
    <property type="project" value="GO_Central"/>
</dbReference>
<dbReference type="CDD" id="cd17965">
    <property type="entry name" value="DEADc_MRH4"/>
    <property type="match status" value="1"/>
</dbReference>
<dbReference type="CDD" id="cd18787">
    <property type="entry name" value="SF2_C_DEAD"/>
    <property type="match status" value="1"/>
</dbReference>
<dbReference type="Gene3D" id="3.40.50.300">
    <property type="entry name" value="P-loop containing nucleotide triphosphate hydrolases"/>
    <property type="match status" value="2"/>
</dbReference>
<dbReference type="InterPro" id="IPR011545">
    <property type="entry name" value="DEAD/DEAH_box_helicase_dom"/>
</dbReference>
<dbReference type="InterPro" id="IPR014001">
    <property type="entry name" value="Helicase_ATP-bd"/>
</dbReference>
<dbReference type="InterPro" id="IPR001650">
    <property type="entry name" value="Helicase_C-like"/>
</dbReference>
<dbReference type="InterPro" id="IPR027417">
    <property type="entry name" value="P-loop_NTPase"/>
</dbReference>
<dbReference type="PANTHER" id="PTHR47960">
    <property type="entry name" value="DEAD-BOX ATP-DEPENDENT RNA HELICASE 50"/>
    <property type="match status" value="1"/>
</dbReference>
<dbReference type="Pfam" id="PF00270">
    <property type="entry name" value="DEAD"/>
    <property type="match status" value="1"/>
</dbReference>
<dbReference type="Pfam" id="PF00271">
    <property type="entry name" value="Helicase_C"/>
    <property type="match status" value="1"/>
</dbReference>
<dbReference type="SMART" id="SM00487">
    <property type="entry name" value="DEXDc"/>
    <property type="match status" value="1"/>
</dbReference>
<dbReference type="SMART" id="SM00490">
    <property type="entry name" value="HELICc"/>
    <property type="match status" value="1"/>
</dbReference>
<dbReference type="SUPFAM" id="SSF52540">
    <property type="entry name" value="P-loop containing nucleoside triphosphate hydrolases"/>
    <property type="match status" value="1"/>
</dbReference>
<dbReference type="PROSITE" id="PS51192">
    <property type="entry name" value="HELICASE_ATP_BIND_1"/>
    <property type="match status" value="1"/>
</dbReference>
<dbReference type="PROSITE" id="PS51194">
    <property type="entry name" value="HELICASE_CTER"/>
    <property type="match status" value="1"/>
</dbReference>
<dbReference type="PROSITE" id="PS51195">
    <property type="entry name" value="Q_MOTIF"/>
    <property type="match status" value="1"/>
</dbReference>